<protein>
    <recommendedName>
        <fullName evidence="1">Uroporphyrinogen decarboxylase</fullName>
        <shortName evidence="1">UPD</shortName>
        <shortName evidence="1">URO-D</shortName>
        <ecNumber evidence="1">4.1.1.37</ecNumber>
    </recommendedName>
</protein>
<proteinExistence type="inferred from homology"/>
<evidence type="ECO:0000255" key="1">
    <source>
        <dbReference type="HAMAP-Rule" id="MF_00218"/>
    </source>
</evidence>
<evidence type="ECO:0000256" key="2">
    <source>
        <dbReference type="SAM" id="MobiDB-lite"/>
    </source>
</evidence>
<reference key="1">
    <citation type="journal article" date="2007" name="Proc. Natl. Acad. Sci. U.S.A.">
        <title>Genome sequencing reveals complex secondary metabolome in the marine actinomycete Salinispora tropica.</title>
        <authorList>
            <person name="Udwary D.W."/>
            <person name="Zeigler L."/>
            <person name="Asolkar R.N."/>
            <person name="Singan V."/>
            <person name="Lapidus A."/>
            <person name="Fenical W."/>
            <person name="Jensen P.R."/>
            <person name="Moore B.S."/>
        </authorList>
    </citation>
    <scope>NUCLEOTIDE SEQUENCE [LARGE SCALE GENOMIC DNA]</scope>
    <source>
        <strain>ATCC BAA-916 / DSM 44818 / JCM 13857 / NBRC 105044 / CNB-440</strain>
    </source>
</reference>
<feature type="chain" id="PRO_1000078086" description="Uroporphyrinogen decarboxylase">
    <location>
        <begin position="1"/>
        <end position="371"/>
    </location>
</feature>
<feature type="region of interest" description="Disordered" evidence="2">
    <location>
        <begin position="1"/>
        <end position="30"/>
    </location>
</feature>
<feature type="compositionally biased region" description="Polar residues" evidence="2">
    <location>
        <begin position="1"/>
        <end position="14"/>
    </location>
</feature>
<feature type="binding site" evidence="1">
    <location>
        <begin position="49"/>
        <end position="53"/>
    </location>
    <ligand>
        <name>substrate</name>
    </ligand>
</feature>
<feature type="binding site" evidence="1">
    <location>
        <position position="98"/>
    </location>
    <ligand>
        <name>substrate</name>
    </ligand>
</feature>
<feature type="binding site" evidence="1">
    <location>
        <position position="173"/>
    </location>
    <ligand>
        <name>substrate</name>
    </ligand>
</feature>
<feature type="binding site" evidence="1">
    <location>
        <position position="228"/>
    </location>
    <ligand>
        <name>substrate</name>
    </ligand>
</feature>
<feature type="binding site" evidence="1">
    <location>
        <position position="342"/>
    </location>
    <ligand>
        <name>substrate</name>
    </ligand>
</feature>
<feature type="site" description="Transition state stabilizer" evidence="1">
    <location>
        <position position="98"/>
    </location>
</feature>
<keyword id="KW-0963">Cytoplasm</keyword>
<keyword id="KW-0210">Decarboxylase</keyword>
<keyword id="KW-0456">Lyase</keyword>
<keyword id="KW-0627">Porphyrin biosynthesis</keyword>
<keyword id="KW-1185">Reference proteome</keyword>
<gene>
    <name evidence="1" type="primary">hemE</name>
    <name type="ordered locus">Strop_1532</name>
</gene>
<comment type="function">
    <text evidence="1">Catalyzes the decarboxylation of four acetate groups of uroporphyrinogen-III to yield coproporphyrinogen-III.</text>
</comment>
<comment type="catalytic activity">
    <reaction evidence="1">
        <text>uroporphyrinogen III + 4 H(+) = coproporphyrinogen III + 4 CO2</text>
        <dbReference type="Rhea" id="RHEA:19865"/>
        <dbReference type="ChEBI" id="CHEBI:15378"/>
        <dbReference type="ChEBI" id="CHEBI:16526"/>
        <dbReference type="ChEBI" id="CHEBI:57308"/>
        <dbReference type="ChEBI" id="CHEBI:57309"/>
        <dbReference type="EC" id="4.1.1.37"/>
    </reaction>
</comment>
<comment type="pathway">
    <text evidence="1">Porphyrin-containing compound metabolism; protoporphyrin-IX biosynthesis; coproporphyrinogen-III from 5-aminolevulinate: step 4/4.</text>
</comment>
<comment type="subunit">
    <text evidence="1">Homodimer.</text>
</comment>
<comment type="subcellular location">
    <subcellularLocation>
        <location evidence="1">Cytoplasm</location>
    </subcellularLocation>
</comment>
<comment type="similarity">
    <text evidence="1">Belongs to the uroporphyrinogen decarboxylase family.</text>
</comment>
<sequence length="371" mass="39733">MARWATMSTETTGTGARDEGPRPGDPADSPFVRACRRKPGPHTPVWFMRQAGRSLPEYRKIRASVAMLESCRRPELITEITLQPVRRHGVDAAILFSDIVVPVAAAGVALDIVPGTGPVVNDPVTTAADVDRIRPISREDVPYVDEAVRMLVGELGATPLIGFAGAPFTLASYLIEGGPSRNHTKTKALMYGDPDLWHALASRLAEVTLAFLKVQIDAGVSAVQLFDSWAGALSEADYRRYVQPHSQAVLAGLADAGVPRIHFGVGTGELLAAMGEAGADVVGVDWRTPLDVATRRVGSERAVQGNLDPCLLFAPWPVIEAEVRRVLAQGRAAPGHIFNLGHGVLPETDPDVLTRVVALIHELTARPNARS</sequence>
<organism>
    <name type="scientific">Salinispora tropica (strain ATCC BAA-916 / DSM 44818 / JCM 13857 / NBRC 105044 / CNB-440)</name>
    <dbReference type="NCBI Taxonomy" id="369723"/>
    <lineage>
        <taxon>Bacteria</taxon>
        <taxon>Bacillati</taxon>
        <taxon>Actinomycetota</taxon>
        <taxon>Actinomycetes</taxon>
        <taxon>Micromonosporales</taxon>
        <taxon>Micromonosporaceae</taxon>
        <taxon>Salinispora</taxon>
    </lineage>
</organism>
<accession>A4X548</accession>
<dbReference type="EC" id="4.1.1.37" evidence="1"/>
<dbReference type="EMBL" id="CP000667">
    <property type="protein sequence ID" value="ABP53998.1"/>
    <property type="molecule type" value="Genomic_DNA"/>
</dbReference>
<dbReference type="SMR" id="A4X548"/>
<dbReference type="STRING" id="369723.Strop_1532"/>
<dbReference type="KEGG" id="stp:Strop_1532"/>
<dbReference type="eggNOG" id="COG0407">
    <property type="taxonomic scope" value="Bacteria"/>
</dbReference>
<dbReference type="HOGENOM" id="CLU_040933_0_1_11"/>
<dbReference type="UniPathway" id="UPA00251">
    <property type="reaction ID" value="UER00321"/>
</dbReference>
<dbReference type="Proteomes" id="UP000000235">
    <property type="component" value="Chromosome"/>
</dbReference>
<dbReference type="GO" id="GO:0005829">
    <property type="term" value="C:cytosol"/>
    <property type="evidence" value="ECO:0007669"/>
    <property type="project" value="TreeGrafter"/>
</dbReference>
<dbReference type="GO" id="GO:0004853">
    <property type="term" value="F:uroporphyrinogen decarboxylase activity"/>
    <property type="evidence" value="ECO:0007669"/>
    <property type="project" value="UniProtKB-UniRule"/>
</dbReference>
<dbReference type="GO" id="GO:0006782">
    <property type="term" value="P:protoporphyrinogen IX biosynthetic process"/>
    <property type="evidence" value="ECO:0007669"/>
    <property type="project" value="UniProtKB-UniRule"/>
</dbReference>
<dbReference type="CDD" id="cd00717">
    <property type="entry name" value="URO-D"/>
    <property type="match status" value="1"/>
</dbReference>
<dbReference type="Gene3D" id="3.20.20.210">
    <property type="match status" value="1"/>
</dbReference>
<dbReference type="HAMAP" id="MF_00218">
    <property type="entry name" value="URO_D"/>
    <property type="match status" value="1"/>
</dbReference>
<dbReference type="InterPro" id="IPR038071">
    <property type="entry name" value="UROD/MetE-like_sf"/>
</dbReference>
<dbReference type="InterPro" id="IPR006361">
    <property type="entry name" value="Uroporphyrinogen_deCO2ase_HemE"/>
</dbReference>
<dbReference type="InterPro" id="IPR000257">
    <property type="entry name" value="Uroporphyrinogen_deCOase"/>
</dbReference>
<dbReference type="NCBIfam" id="TIGR01464">
    <property type="entry name" value="hemE"/>
    <property type="match status" value="1"/>
</dbReference>
<dbReference type="PANTHER" id="PTHR21091">
    <property type="entry name" value="METHYLTETRAHYDROFOLATE:HOMOCYSTEINE METHYLTRANSFERASE RELATED"/>
    <property type="match status" value="1"/>
</dbReference>
<dbReference type="PANTHER" id="PTHR21091:SF169">
    <property type="entry name" value="UROPORPHYRINOGEN DECARBOXYLASE"/>
    <property type="match status" value="1"/>
</dbReference>
<dbReference type="Pfam" id="PF01208">
    <property type="entry name" value="URO-D"/>
    <property type="match status" value="1"/>
</dbReference>
<dbReference type="SUPFAM" id="SSF51726">
    <property type="entry name" value="UROD/MetE-like"/>
    <property type="match status" value="1"/>
</dbReference>
<dbReference type="PROSITE" id="PS00906">
    <property type="entry name" value="UROD_1"/>
    <property type="match status" value="1"/>
</dbReference>
<dbReference type="PROSITE" id="PS00907">
    <property type="entry name" value="UROD_2"/>
    <property type="match status" value="1"/>
</dbReference>
<name>DCUP_SALTO</name>